<reference key="1">
    <citation type="journal article" date="2005" name="Science">
        <title>The transcriptional landscape of the mammalian genome.</title>
        <authorList>
            <person name="Carninci P."/>
            <person name="Kasukawa T."/>
            <person name="Katayama S."/>
            <person name="Gough J."/>
            <person name="Frith M.C."/>
            <person name="Maeda N."/>
            <person name="Oyama R."/>
            <person name="Ravasi T."/>
            <person name="Lenhard B."/>
            <person name="Wells C."/>
            <person name="Kodzius R."/>
            <person name="Shimokawa K."/>
            <person name="Bajic V.B."/>
            <person name="Brenner S.E."/>
            <person name="Batalov S."/>
            <person name="Forrest A.R."/>
            <person name="Zavolan M."/>
            <person name="Davis M.J."/>
            <person name="Wilming L.G."/>
            <person name="Aidinis V."/>
            <person name="Allen J.E."/>
            <person name="Ambesi-Impiombato A."/>
            <person name="Apweiler R."/>
            <person name="Aturaliya R.N."/>
            <person name="Bailey T.L."/>
            <person name="Bansal M."/>
            <person name="Baxter L."/>
            <person name="Beisel K.W."/>
            <person name="Bersano T."/>
            <person name="Bono H."/>
            <person name="Chalk A.M."/>
            <person name="Chiu K.P."/>
            <person name="Choudhary V."/>
            <person name="Christoffels A."/>
            <person name="Clutterbuck D.R."/>
            <person name="Crowe M.L."/>
            <person name="Dalla E."/>
            <person name="Dalrymple B.P."/>
            <person name="de Bono B."/>
            <person name="Della Gatta G."/>
            <person name="di Bernardo D."/>
            <person name="Down T."/>
            <person name="Engstrom P."/>
            <person name="Fagiolini M."/>
            <person name="Faulkner G."/>
            <person name="Fletcher C.F."/>
            <person name="Fukushima T."/>
            <person name="Furuno M."/>
            <person name="Futaki S."/>
            <person name="Gariboldi M."/>
            <person name="Georgii-Hemming P."/>
            <person name="Gingeras T.R."/>
            <person name="Gojobori T."/>
            <person name="Green R.E."/>
            <person name="Gustincich S."/>
            <person name="Harbers M."/>
            <person name="Hayashi Y."/>
            <person name="Hensch T.K."/>
            <person name="Hirokawa N."/>
            <person name="Hill D."/>
            <person name="Huminiecki L."/>
            <person name="Iacono M."/>
            <person name="Ikeo K."/>
            <person name="Iwama A."/>
            <person name="Ishikawa T."/>
            <person name="Jakt M."/>
            <person name="Kanapin A."/>
            <person name="Katoh M."/>
            <person name="Kawasawa Y."/>
            <person name="Kelso J."/>
            <person name="Kitamura H."/>
            <person name="Kitano H."/>
            <person name="Kollias G."/>
            <person name="Krishnan S.P."/>
            <person name="Kruger A."/>
            <person name="Kummerfeld S.K."/>
            <person name="Kurochkin I.V."/>
            <person name="Lareau L.F."/>
            <person name="Lazarevic D."/>
            <person name="Lipovich L."/>
            <person name="Liu J."/>
            <person name="Liuni S."/>
            <person name="McWilliam S."/>
            <person name="Madan Babu M."/>
            <person name="Madera M."/>
            <person name="Marchionni L."/>
            <person name="Matsuda H."/>
            <person name="Matsuzawa S."/>
            <person name="Miki H."/>
            <person name="Mignone F."/>
            <person name="Miyake S."/>
            <person name="Morris K."/>
            <person name="Mottagui-Tabar S."/>
            <person name="Mulder N."/>
            <person name="Nakano N."/>
            <person name="Nakauchi H."/>
            <person name="Ng P."/>
            <person name="Nilsson R."/>
            <person name="Nishiguchi S."/>
            <person name="Nishikawa S."/>
            <person name="Nori F."/>
            <person name="Ohara O."/>
            <person name="Okazaki Y."/>
            <person name="Orlando V."/>
            <person name="Pang K.C."/>
            <person name="Pavan W.J."/>
            <person name="Pavesi G."/>
            <person name="Pesole G."/>
            <person name="Petrovsky N."/>
            <person name="Piazza S."/>
            <person name="Reed J."/>
            <person name="Reid J.F."/>
            <person name="Ring B.Z."/>
            <person name="Ringwald M."/>
            <person name="Rost B."/>
            <person name="Ruan Y."/>
            <person name="Salzberg S.L."/>
            <person name="Sandelin A."/>
            <person name="Schneider C."/>
            <person name="Schoenbach C."/>
            <person name="Sekiguchi K."/>
            <person name="Semple C.A."/>
            <person name="Seno S."/>
            <person name="Sessa L."/>
            <person name="Sheng Y."/>
            <person name="Shibata Y."/>
            <person name="Shimada H."/>
            <person name="Shimada K."/>
            <person name="Silva D."/>
            <person name="Sinclair B."/>
            <person name="Sperling S."/>
            <person name="Stupka E."/>
            <person name="Sugiura K."/>
            <person name="Sultana R."/>
            <person name="Takenaka Y."/>
            <person name="Taki K."/>
            <person name="Tammoja K."/>
            <person name="Tan S.L."/>
            <person name="Tang S."/>
            <person name="Taylor M.S."/>
            <person name="Tegner J."/>
            <person name="Teichmann S.A."/>
            <person name="Ueda H.R."/>
            <person name="van Nimwegen E."/>
            <person name="Verardo R."/>
            <person name="Wei C.L."/>
            <person name="Yagi K."/>
            <person name="Yamanishi H."/>
            <person name="Zabarovsky E."/>
            <person name="Zhu S."/>
            <person name="Zimmer A."/>
            <person name="Hide W."/>
            <person name="Bult C."/>
            <person name="Grimmond S.M."/>
            <person name="Teasdale R.D."/>
            <person name="Liu E.T."/>
            <person name="Brusic V."/>
            <person name="Quackenbush J."/>
            <person name="Wahlestedt C."/>
            <person name="Mattick J.S."/>
            <person name="Hume D.A."/>
            <person name="Kai C."/>
            <person name="Sasaki D."/>
            <person name="Tomaru Y."/>
            <person name="Fukuda S."/>
            <person name="Kanamori-Katayama M."/>
            <person name="Suzuki M."/>
            <person name="Aoki J."/>
            <person name="Arakawa T."/>
            <person name="Iida J."/>
            <person name="Imamura K."/>
            <person name="Itoh M."/>
            <person name="Kato T."/>
            <person name="Kawaji H."/>
            <person name="Kawagashira N."/>
            <person name="Kawashima T."/>
            <person name="Kojima M."/>
            <person name="Kondo S."/>
            <person name="Konno H."/>
            <person name="Nakano K."/>
            <person name="Ninomiya N."/>
            <person name="Nishio T."/>
            <person name="Okada M."/>
            <person name="Plessy C."/>
            <person name="Shibata K."/>
            <person name="Shiraki T."/>
            <person name="Suzuki S."/>
            <person name="Tagami M."/>
            <person name="Waki K."/>
            <person name="Watahiki A."/>
            <person name="Okamura-Oho Y."/>
            <person name="Suzuki H."/>
            <person name="Kawai J."/>
            <person name="Hayashizaki Y."/>
        </authorList>
    </citation>
    <scope>NUCLEOTIDE SEQUENCE [LARGE SCALE MRNA] (ISOFORM 1)</scope>
    <source>
        <strain>C57BL/6J</strain>
        <strain>NOD</strain>
        <tissue>Corpora quadrigemina</tissue>
    </source>
</reference>
<reference key="2">
    <citation type="journal article" date="2004" name="Genome Res.">
        <title>The status, quality, and expansion of the NIH full-length cDNA project: the Mammalian Gene Collection (MGC).</title>
        <authorList>
            <consortium name="The MGC Project Team"/>
        </authorList>
    </citation>
    <scope>NUCLEOTIDE SEQUENCE [LARGE SCALE MRNA] (ISOFORM 2)</scope>
    <source>
        <strain>FVB/N</strain>
        <tissue>Mammary tumor</tissue>
    </source>
</reference>
<reference key="3">
    <citation type="journal article" date="2010" name="Cell">
        <title>A tissue-specific atlas of mouse protein phosphorylation and expression.</title>
        <authorList>
            <person name="Huttlin E.L."/>
            <person name="Jedrychowski M.P."/>
            <person name="Elias J.E."/>
            <person name="Goswami T."/>
            <person name="Rad R."/>
            <person name="Beausoleil S.A."/>
            <person name="Villen J."/>
            <person name="Haas W."/>
            <person name="Sowa M.E."/>
            <person name="Gygi S.P."/>
        </authorList>
    </citation>
    <scope>IDENTIFICATION BY MASS SPECTROMETRY [LARGE SCALE ANALYSIS]</scope>
    <source>
        <tissue>Brain</tissue>
        <tissue>Kidney</tissue>
        <tissue>Lung</tissue>
        <tissue>Pancreas</tissue>
        <tissue>Spleen</tissue>
        <tissue>Testis</tissue>
    </source>
</reference>
<keyword id="KW-0007">Acetylation</keyword>
<keyword id="KW-0025">Alternative splicing</keyword>
<keyword id="KW-0072">Autophagy</keyword>
<keyword id="KW-0963">Cytoplasm</keyword>
<keyword id="KW-1185">Reference proteome</keyword>
<dbReference type="EMBL" id="AK045350">
    <property type="protein sequence ID" value="BAC32323.1"/>
    <property type="molecule type" value="mRNA"/>
</dbReference>
<dbReference type="EMBL" id="AK154940">
    <property type="protein sequence ID" value="BAE32940.1"/>
    <property type="molecule type" value="mRNA"/>
</dbReference>
<dbReference type="EMBL" id="BC016504">
    <property type="protein sequence ID" value="AAH16504.1"/>
    <property type="molecule type" value="mRNA"/>
</dbReference>
<dbReference type="CCDS" id="CCDS27360.1">
    <molecule id="Q8BR90-1"/>
</dbReference>
<dbReference type="RefSeq" id="NP_666042.2">
    <molecule id="Q8BR90-1"/>
    <property type="nucleotide sequence ID" value="NM_145930.2"/>
</dbReference>
<dbReference type="SMR" id="Q8BR90"/>
<dbReference type="FunCoup" id="Q8BR90">
    <property type="interactions" value="3786"/>
</dbReference>
<dbReference type="STRING" id="10090.ENSMUSP00000038476"/>
<dbReference type="PhosphoSitePlus" id="Q8BR90"/>
<dbReference type="SwissPalm" id="Q8BR90"/>
<dbReference type="PaxDb" id="10090-ENSMUSP00000038476"/>
<dbReference type="PeptideAtlas" id="Q8BR90"/>
<dbReference type="Pumba" id="Q8BR90"/>
<dbReference type="Antibodypedia" id="23213">
    <property type="antibodies" value="63 antibodies from 13 providers"/>
</dbReference>
<dbReference type="DNASU" id="106064"/>
<dbReference type="Ensembl" id="ENSMUST00000046633.10">
    <molecule id="Q8BR90-1"/>
    <property type="protein sequence ID" value="ENSMUSP00000038476.9"/>
    <property type="gene ID" value="ENSMUSG00000041935.11"/>
</dbReference>
<dbReference type="GeneID" id="106064"/>
<dbReference type="KEGG" id="mmu:106064"/>
<dbReference type="UCSC" id="uc007vcg.1">
    <molecule id="Q8BR90-2"/>
    <property type="organism name" value="mouse"/>
</dbReference>
<dbReference type="UCSC" id="uc007vch.1">
    <molecule id="Q8BR90-1"/>
    <property type="organism name" value="mouse"/>
</dbReference>
<dbReference type="AGR" id="MGI:2146232"/>
<dbReference type="CTD" id="285636"/>
<dbReference type="MGI" id="MGI:2146232">
    <property type="gene designation" value="Rimoc1"/>
</dbReference>
<dbReference type="VEuPathDB" id="HostDB:ENSMUSG00000041935"/>
<dbReference type="eggNOG" id="ENOG502QW9A">
    <property type="taxonomic scope" value="Eukaryota"/>
</dbReference>
<dbReference type="GeneTree" id="ENSGT00390000011383"/>
<dbReference type="HOGENOM" id="CLU_082742_0_0_1"/>
<dbReference type="InParanoid" id="Q8BR90"/>
<dbReference type="OMA" id="NEGKEHP"/>
<dbReference type="OrthoDB" id="6135810at2759"/>
<dbReference type="PhylomeDB" id="Q8BR90"/>
<dbReference type="TreeFam" id="TF331577"/>
<dbReference type="BioGRID-ORCS" id="106064">
    <property type="hits" value="2 hits in 77 CRISPR screens"/>
</dbReference>
<dbReference type="PRO" id="PR:Q8BR90"/>
<dbReference type="Proteomes" id="UP000000589">
    <property type="component" value="Chromosome 15"/>
</dbReference>
<dbReference type="RNAct" id="Q8BR90">
    <property type="molecule type" value="protein"/>
</dbReference>
<dbReference type="Bgee" id="ENSMUSG00000041935">
    <property type="expression patterns" value="Expressed in parotid gland and 259 other cell types or tissues"/>
</dbReference>
<dbReference type="GO" id="GO:0005829">
    <property type="term" value="C:cytosol"/>
    <property type="evidence" value="ECO:0000250"/>
    <property type="project" value="UniProtKB"/>
</dbReference>
<dbReference type="GO" id="GO:0005654">
    <property type="term" value="C:nucleoplasm"/>
    <property type="evidence" value="ECO:0007669"/>
    <property type="project" value="Ensembl"/>
</dbReference>
<dbReference type="GO" id="GO:0000423">
    <property type="term" value="P:mitophagy"/>
    <property type="evidence" value="ECO:0000250"/>
    <property type="project" value="UniProtKB"/>
</dbReference>
<dbReference type="InterPro" id="IPR037657">
    <property type="entry name" value="RIMC1"/>
</dbReference>
<dbReference type="PANTHER" id="PTHR28494:SF1">
    <property type="entry name" value="RAB7A-INTERACTING MON1-CCZ1 COMPLEX SUBUNIT 1"/>
    <property type="match status" value="1"/>
</dbReference>
<dbReference type="PANTHER" id="PTHR28494">
    <property type="entry name" value="UPF0600 PROTEIN C5ORF51"/>
    <property type="match status" value="1"/>
</dbReference>
<dbReference type="Pfam" id="PF17716">
    <property type="entry name" value="RIMC1"/>
    <property type="match status" value="1"/>
</dbReference>
<name>RIMC1_MOUSE</name>
<evidence type="ECO:0000250" key="1">
    <source>
        <dbReference type="UniProtKB" id="A6NDU8"/>
    </source>
</evidence>
<evidence type="ECO:0000303" key="2">
    <source>
    </source>
</evidence>
<evidence type="ECO:0000305" key="3"/>
<evidence type="ECO:0000312" key="4">
    <source>
        <dbReference type="MGI" id="MGI:2146232"/>
    </source>
</evidence>
<gene>
    <name evidence="4" type="primary">Rimoc1</name>
    <name evidence="4" type="synonym">AW549877</name>
</gene>
<protein>
    <recommendedName>
        <fullName evidence="4">RAB7A-interacting MON1-CCZ1 complex subunit 1</fullName>
    </recommendedName>
    <alternativeName>
        <fullName>UPF0600 protein C5orf51 homolog</fullName>
    </alternativeName>
</protein>
<accession>Q8BR90</accession>
<accession>Q91YM1</accession>
<proteinExistence type="evidence at protein level"/>
<comment type="function">
    <text evidence="1">Plays an important role in the removal of damaged mitochondria via mitophagy by controlling the stability and localization of RAB7A (By similarity). Required for the recruitment of RAB7A and ATG9A vesicles to damaged mitochondria and promotes the stability of RAB7A by inhibiting its proteasomal degradation during mitophagy (By similarity).</text>
</comment>
<comment type="subunit">
    <text evidence="1">Interacts with the MON1A-CCZ1B complex. Interacts with GDP-bound RAB7A and promotes its interaction with the MON1A-CCZ1B complex.</text>
</comment>
<comment type="subcellular location">
    <subcellularLocation>
        <location evidence="1">Cytoplasm</location>
        <location evidence="1">Cytosol</location>
    </subcellularLocation>
</comment>
<comment type="alternative products">
    <event type="alternative splicing"/>
    <isoform>
        <id>Q8BR90-1</id>
        <name>1</name>
        <sequence type="displayed"/>
    </isoform>
    <isoform>
        <id>Q8BR90-2</id>
        <name>2</name>
        <sequence type="described" ref="VSP_034224 VSP_034225"/>
    </isoform>
</comment>
<comment type="similarity">
    <text evidence="3">Belongs to the RIMOC1 family.</text>
</comment>
<organism>
    <name type="scientific">Mus musculus</name>
    <name type="common">Mouse</name>
    <dbReference type="NCBI Taxonomy" id="10090"/>
    <lineage>
        <taxon>Eukaryota</taxon>
        <taxon>Metazoa</taxon>
        <taxon>Chordata</taxon>
        <taxon>Craniata</taxon>
        <taxon>Vertebrata</taxon>
        <taxon>Euteleostomi</taxon>
        <taxon>Mammalia</taxon>
        <taxon>Eutheria</taxon>
        <taxon>Euarchontoglires</taxon>
        <taxon>Glires</taxon>
        <taxon>Rodentia</taxon>
        <taxon>Myomorpha</taxon>
        <taxon>Muroidea</taxon>
        <taxon>Muridae</taxon>
        <taxon>Murinae</taxon>
        <taxon>Mus</taxon>
        <taxon>Mus</taxon>
    </lineage>
</organism>
<feature type="initiator methionine" description="Removed" evidence="1">
    <location>
        <position position="1"/>
    </location>
</feature>
<feature type="chain" id="PRO_0000341215" description="RAB7A-interacting MON1-CCZ1 complex subunit 1">
    <location>
        <begin position="2"/>
        <end position="294"/>
    </location>
</feature>
<feature type="modified residue" description="N-acetylalanine" evidence="1">
    <location>
        <position position="2"/>
    </location>
</feature>
<feature type="splice variant" id="VSP_034224" description="In isoform 2." evidence="2">
    <location>
        <begin position="1"/>
        <end position="68"/>
    </location>
</feature>
<feature type="splice variant" id="VSP_034225" description="In isoform 2." evidence="2">
    <original>Q</original>
    <variation>M</variation>
    <location>
        <position position="69"/>
    </location>
</feature>
<sequence>MAAAVSGVVRRVEELGDLAQAHIQHLSEAAGEDDHFLIRASAALEKLKLLCGEEKECSNPSNLLELYTQAILDMTYFEENKLVDEDFPEDCSPQKVKELLAFLSEPEILAKESNMHPKLCGLLGAELLECLSWRRGALLYMYCHSLTKRREWLLRKSNLLQKYLVDGINYLLQMLNYRCPVQLNEGVSFQDLDTAKLLSTGVFSDIHVLAMMYSGEMCYWGLKHCTDQQSENHEVDTDVFGASCTTHKETLDFREVGEKILKKYVSVCEGPLKEQEWNTANAKQILSFFQQRCS</sequence>